<dbReference type="EC" id="3.6.1.-" evidence="1"/>
<dbReference type="EMBL" id="BA000039">
    <property type="protein sequence ID" value="BAC08539.1"/>
    <property type="molecule type" value="Genomic_DNA"/>
</dbReference>
<dbReference type="RefSeq" id="NP_681777.1">
    <property type="nucleotide sequence ID" value="NC_004113.1"/>
</dbReference>
<dbReference type="RefSeq" id="WP_011056831.1">
    <property type="nucleotide sequence ID" value="NC_004113.1"/>
</dbReference>
<dbReference type="SMR" id="Q8DK79"/>
<dbReference type="STRING" id="197221.gene:10747579"/>
<dbReference type="EnsemblBacteria" id="BAC08539">
    <property type="protein sequence ID" value="BAC08539"/>
    <property type="gene ID" value="BAC08539"/>
</dbReference>
<dbReference type="KEGG" id="tel:tll0987"/>
<dbReference type="PATRIC" id="fig|197221.4.peg.1037"/>
<dbReference type="eggNOG" id="COG1162">
    <property type="taxonomic scope" value="Bacteria"/>
</dbReference>
<dbReference type="Proteomes" id="UP000000440">
    <property type="component" value="Chromosome"/>
</dbReference>
<dbReference type="GO" id="GO:0005737">
    <property type="term" value="C:cytoplasm"/>
    <property type="evidence" value="ECO:0007669"/>
    <property type="project" value="UniProtKB-SubCell"/>
</dbReference>
<dbReference type="GO" id="GO:0005525">
    <property type="term" value="F:GTP binding"/>
    <property type="evidence" value="ECO:0007669"/>
    <property type="project" value="UniProtKB-UniRule"/>
</dbReference>
<dbReference type="GO" id="GO:0003924">
    <property type="term" value="F:GTPase activity"/>
    <property type="evidence" value="ECO:0007669"/>
    <property type="project" value="UniProtKB-UniRule"/>
</dbReference>
<dbReference type="GO" id="GO:0046872">
    <property type="term" value="F:metal ion binding"/>
    <property type="evidence" value="ECO:0007669"/>
    <property type="project" value="UniProtKB-KW"/>
</dbReference>
<dbReference type="GO" id="GO:0019843">
    <property type="term" value="F:rRNA binding"/>
    <property type="evidence" value="ECO:0007669"/>
    <property type="project" value="UniProtKB-KW"/>
</dbReference>
<dbReference type="GO" id="GO:0042274">
    <property type="term" value="P:ribosomal small subunit biogenesis"/>
    <property type="evidence" value="ECO:0007669"/>
    <property type="project" value="UniProtKB-UniRule"/>
</dbReference>
<dbReference type="CDD" id="cd01854">
    <property type="entry name" value="YjeQ_EngC"/>
    <property type="match status" value="1"/>
</dbReference>
<dbReference type="Gene3D" id="2.40.50.140">
    <property type="entry name" value="Nucleic acid-binding proteins"/>
    <property type="match status" value="1"/>
</dbReference>
<dbReference type="Gene3D" id="3.40.50.300">
    <property type="entry name" value="P-loop containing nucleotide triphosphate hydrolases"/>
    <property type="match status" value="1"/>
</dbReference>
<dbReference type="Gene3D" id="1.10.40.50">
    <property type="entry name" value="Probable gtpase engc, domain 3"/>
    <property type="match status" value="1"/>
</dbReference>
<dbReference type="HAMAP" id="MF_01820">
    <property type="entry name" value="GTPase_RsgA"/>
    <property type="match status" value="1"/>
</dbReference>
<dbReference type="InterPro" id="IPR030378">
    <property type="entry name" value="G_CP_dom"/>
</dbReference>
<dbReference type="InterPro" id="IPR012340">
    <property type="entry name" value="NA-bd_OB-fold"/>
</dbReference>
<dbReference type="InterPro" id="IPR027417">
    <property type="entry name" value="P-loop_NTPase"/>
</dbReference>
<dbReference type="InterPro" id="IPR004881">
    <property type="entry name" value="Ribosome_biogen_GTPase_RsgA"/>
</dbReference>
<dbReference type="InterPro" id="IPR010914">
    <property type="entry name" value="RsgA_GTPase_dom"/>
</dbReference>
<dbReference type="NCBIfam" id="NF008932">
    <property type="entry name" value="PRK12289.1"/>
    <property type="match status" value="1"/>
</dbReference>
<dbReference type="NCBIfam" id="TIGR00157">
    <property type="entry name" value="ribosome small subunit-dependent GTPase A"/>
    <property type="match status" value="1"/>
</dbReference>
<dbReference type="PANTHER" id="PTHR32120">
    <property type="entry name" value="SMALL RIBOSOMAL SUBUNIT BIOGENESIS GTPASE RSGA"/>
    <property type="match status" value="1"/>
</dbReference>
<dbReference type="PANTHER" id="PTHR32120:SF11">
    <property type="entry name" value="SMALL RIBOSOMAL SUBUNIT BIOGENESIS GTPASE RSGA 1, MITOCHONDRIAL-RELATED"/>
    <property type="match status" value="1"/>
</dbReference>
<dbReference type="Pfam" id="PF03193">
    <property type="entry name" value="RsgA_GTPase"/>
    <property type="match status" value="1"/>
</dbReference>
<dbReference type="SUPFAM" id="SSF50249">
    <property type="entry name" value="Nucleic acid-binding proteins"/>
    <property type="match status" value="1"/>
</dbReference>
<dbReference type="SUPFAM" id="SSF52540">
    <property type="entry name" value="P-loop containing nucleoside triphosphate hydrolases"/>
    <property type="match status" value="1"/>
</dbReference>
<dbReference type="PROSITE" id="PS50936">
    <property type="entry name" value="ENGC_GTPASE"/>
    <property type="match status" value="1"/>
</dbReference>
<dbReference type="PROSITE" id="PS51721">
    <property type="entry name" value="G_CP"/>
    <property type="match status" value="1"/>
</dbReference>
<organism>
    <name type="scientific">Thermosynechococcus vestitus (strain NIES-2133 / IAM M-273 / BP-1)</name>
    <dbReference type="NCBI Taxonomy" id="197221"/>
    <lineage>
        <taxon>Bacteria</taxon>
        <taxon>Bacillati</taxon>
        <taxon>Cyanobacteriota</taxon>
        <taxon>Cyanophyceae</taxon>
        <taxon>Acaryochloridales</taxon>
        <taxon>Thermosynechococcaceae</taxon>
        <taxon>Thermosynechococcus</taxon>
    </lineage>
</organism>
<feature type="chain" id="PRO_0000171534" description="Small ribosomal subunit biogenesis GTPase RsgA">
    <location>
        <begin position="1"/>
        <end position="348"/>
    </location>
</feature>
<feature type="domain" description="CP-type G" evidence="2">
    <location>
        <begin position="72"/>
        <end position="230"/>
    </location>
</feature>
<feature type="region of interest" description="Disordered" evidence="3">
    <location>
        <begin position="305"/>
        <end position="348"/>
    </location>
</feature>
<feature type="compositionally biased region" description="Basic and acidic residues" evidence="3">
    <location>
        <begin position="305"/>
        <end position="322"/>
    </location>
</feature>
<feature type="compositionally biased region" description="Basic residues" evidence="3">
    <location>
        <begin position="323"/>
        <end position="333"/>
    </location>
</feature>
<feature type="binding site" evidence="1">
    <location>
        <begin position="121"/>
        <end position="124"/>
    </location>
    <ligand>
        <name>GTP</name>
        <dbReference type="ChEBI" id="CHEBI:37565"/>
    </ligand>
</feature>
<feature type="binding site" evidence="1">
    <location>
        <begin position="172"/>
        <end position="180"/>
    </location>
    <ligand>
        <name>GTP</name>
        <dbReference type="ChEBI" id="CHEBI:37565"/>
    </ligand>
</feature>
<feature type="binding site" evidence="1">
    <location>
        <position position="255"/>
    </location>
    <ligand>
        <name>Zn(2+)</name>
        <dbReference type="ChEBI" id="CHEBI:29105"/>
    </ligand>
</feature>
<feature type="binding site" evidence="1">
    <location>
        <position position="260"/>
    </location>
    <ligand>
        <name>Zn(2+)</name>
        <dbReference type="ChEBI" id="CHEBI:29105"/>
    </ligand>
</feature>
<feature type="binding site" evidence="1">
    <location>
        <position position="262"/>
    </location>
    <ligand>
        <name>Zn(2+)</name>
        <dbReference type="ChEBI" id="CHEBI:29105"/>
    </ligand>
</feature>
<feature type="binding site" evidence="1">
    <location>
        <position position="268"/>
    </location>
    <ligand>
        <name>Zn(2+)</name>
        <dbReference type="ChEBI" id="CHEBI:29105"/>
    </ligand>
</feature>
<gene>
    <name evidence="1" type="primary">rsgA</name>
    <name type="ordered locus">tll0987</name>
</gene>
<proteinExistence type="inferred from homology"/>
<keyword id="KW-0963">Cytoplasm</keyword>
<keyword id="KW-0342">GTP-binding</keyword>
<keyword id="KW-0378">Hydrolase</keyword>
<keyword id="KW-0479">Metal-binding</keyword>
<keyword id="KW-0547">Nucleotide-binding</keyword>
<keyword id="KW-1185">Reference proteome</keyword>
<keyword id="KW-0690">Ribosome biogenesis</keyword>
<keyword id="KW-0694">RNA-binding</keyword>
<keyword id="KW-0699">rRNA-binding</keyword>
<keyword id="KW-0862">Zinc</keyword>
<name>RSGA_THEVB</name>
<sequence>MSHLVGLVRAVQANYYRVRLREPSNGVEELLCVRRARLKKMGQQVCVGDWVVVSHPDWPGQRGAIAEILPRRNQLSRPAIANVDQILLLFALADPPADVHPITRFLLTAEGLNVEIQVVFTKADLVSPQEQQQWRDRLQQWGYRCHVLSLTQGIAWQALRPHLANKITVVCGPSGVGKSSLIRHLTPREDIRVGAVSDHWHRGRHTTRHVELFPLAEGGWIADTPGFNQPELPPDPRQLAAAFPEIRQRLSQDQCLFDNCRHDQEPGCCVRGNWERYPLYIEYLHQLETIASAEPSLAKVPLVKAKSDRQGQQRLEPLLDAKKYRRRSRRQQHQHVNPMAEEVLDSEW</sequence>
<accession>Q8DK79</accession>
<evidence type="ECO:0000255" key="1">
    <source>
        <dbReference type="HAMAP-Rule" id="MF_01820"/>
    </source>
</evidence>
<evidence type="ECO:0000255" key="2">
    <source>
        <dbReference type="PROSITE-ProRule" id="PRU01058"/>
    </source>
</evidence>
<evidence type="ECO:0000256" key="3">
    <source>
        <dbReference type="SAM" id="MobiDB-lite"/>
    </source>
</evidence>
<comment type="function">
    <text evidence="1">One of several proteins that assist in the late maturation steps of the functional core of the 30S ribosomal subunit. Helps release RbfA from mature subunits. May play a role in the assembly of ribosomal proteins into the subunit. Circularly permuted GTPase that catalyzes slow GTP hydrolysis, GTPase activity is stimulated by the 30S ribosomal subunit.</text>
</comment>
<comment type="cofactor">
    <cofactor evidence="1">
        <name>Zn(2+)</name>
        <dbReference type="ChEBI" id="CHEBI:29105"/>
    </cofactor>
    <text evidence="1">Binds 1 zinc ion per subunit.</text>
</comment>
<comment type="subunit">
    <text evidence="1">Monomer. Associates with 30S ribosomal subunit, binds 16S rRNA.</text>
</comment>
<comment type="subcellular location">
    <subcellularLocation>
        <location evidence="1">Cytoplasm</location>
    </subcellularLocation>
</comment>
<comment type="similarity">
    <text evidence="1">Belongs to the TRAFAC class YlqF/YawG GTPase family. RsgA subfamily.</text>
</comment>
<protein>
    <recommendedName>
        <fullName evidence="1">Small ribosomal subunit biogenesis GTPase RsgA</fullName>
        <ecNumber evidence="1">3.6.1.-</ecNumber>
    </recommendedName>
</protein>
<reference key="1">
    <citation type="journal article" date="2002" name="DNA Res.">
        <title>Complete genome structure of the thermophilic cyanobacterium Thermosynechococcus elongatus BP-1.</title>
        <authorList>
            <person name="Nakamura Y."/>
            <person name="Kaneko T."/>
            <person name="Sato S."/>
            <person name="Ikeuchi M."/>
            <person name="Katoh H."/>
            <person name="Sasamoto S."/>
            <person name="Watanabe A."/>
            <person name="Iriguchi M."/>
            <person name="Kawashima K."/>
            <person name="Kimura T."/>
            <person name="Kishida Y."/>
            <person name="Kiyokawa C."/>
            <person name="Kohara M."/>
            <person name="Matsumoto M."/>
            <person name="Matsuno A."/>
            <person name="Nakazaki N."/>
            <person name="Shimpo S."/>
            <person name="Sugimoto M."/>
            <person name="Takeuchi C."/>
            <person name="Yamada M."/>
            <person name="Tabata S."/>
        </authorList>
    </citation>
    <scope>NUCLEOTIDE SEQUENCE [LARGE SCALE GENOMIC DNA]</scope>
    <source>
        <strain>NIES-2133 / IAM M-273 / BP-1</strain>
    </source>
</reference>